<reference key="1">
    <citation type="submission" date="2004-09" db="EMBL/GenBank/DDBJ databases">
        <authorList>
            <consortium name="NIH - Xenopus Gene Collection (XGC) project"/>
        </authorList>
    </citation>
    <scope>NUCLEOTIDE SEQUENCE [LARGE SCALE MRNA]</scope>
    <source>
        <tissue>Embryo</tissue>
    </source>
</reference>
<feature type="transit peptide" description="Mitochondrion" evidence="2">
    <location>
        <begin position="1"/>
        <end position="31"/>
    </location>
</feature>
<feature type="chain" id="PRO_0000043168" description="Mitochondrial import inner membrane translocase subunit Tim21">
    <location>
        <begin position="32"/>
        <end position="232"/>
    </location>
</feature>
<feature type="transmembrane region" description="Helical" evidence="2">
    <location>
        <begin position="96"/>
        <end position="116"/>
    </location>
</feature>
<accession>Q5XKA2</accession>
<proteinExistence type="evidence at transcript level"/>
<organism>
    <name type="scientific">Xenopus laevis</name>
    <name type="common">African clawed frog</name>
    <dbReference type="NCBI Taxonomy" id="8355"/>
    <lineage>
        <taxon>Eukaryota</taxon>
        <taxon>Metazoa</taxon>
        <taxon>Chordata</taxon>
        <taxon>Craniata</taxon>
        <taxon>Vertebrata</taxon>
        <taxon>Euteleostomi</taxon>
        <taxon>Amphibia</taxon>
        <taxon>Batrachia</taxon>
        <taxon>Anura</taxon>
        <taxon>Pipoidea</taxon>
        <taxon>Pipidae</taxon>
        <taxon>Xenopodinae</taxon>
        <taxon>Xenopus</taxon>
        <taxon>Xenopus</taxon>
    </lineage>
</organism>
<comment type="function">
    <text evidence="1">May participate in the translocation of transit peptide-containing proteins across the mitochondrial inner membrane.</text>
</comment>
<comment type="subcellular location">
    <subcellularLocation>
        <location evidence="3">Mitochondrion membrane</location>
        <topology evidence="3">Single-pass membrane protein</topology>
    </subcellularLocation>
</comment>
<comment type="similarity">
    <text evidence="3">Belongs to the TIM21 family.</text>
</comment>
<evidence type="ECO:0000250" key="1"/>
<evidence type="ECO:0000255" key="2"/>
<evidence type="ECO:0000305" key="3"/>
<name>TIM21_XENLA</name>
<gene>
    <name type="primary">timm21</name>
    <name type="synonym">tim21</name>
</gene>
<dbReference type="EMBL" id="BC083009">
    <property type="protein sequence ID" value="AAH83009.1"/>
    <property type="molecule type" value="mRNA"/>
</dbReference>
<dbReference type="RefSeq" id="NP_001088133.1">
    <property type="nucleotide sequence ID" value="NM_001094664.1"/>
</dbReference>
<dbReference type="SMR" id="Q5XKA2"/>
<dbReference type="GeneID" id="494838"/>
<dbReference type="KEGG" id="xla:494838"/>
<dbReference type="AGR" id="Xenbase:XB-GENE-1009773"/>
<dbReference type="CTD" id="494838"/>
<dbReference type="Xenbase" id="XB-GENE-1009773">
    <property type="gene designation" value="timm21.L"/>
</dbReference>
<dbReference type="OrthoDB" id="436405at2759"/>
<dbReference type="Proteomes" id="UP000186698">
    <property type="component" value="Chromosome 6L"/>
</dbReference>
<dbReference type="Bgee" id="494838">
    <property type="expression patterns" value="Expressed in muscle tissue and 19 other cell types or tissues"/>
</dbReference>
<dbReference type="GO" id="GO:0005744">
    <property type="term" value="C:TIM23 mitochondrial import inner membrane translocase complex"/>
    <property type="evidence" value="ECO:0000318"/>
    <property type="project" value="GO_Central"/>
</dbReference>
<dbReference type="GO" id="GO:0030150">
    <property type="term" value="P:protein import into mitochondrial matrix"/>
    <property type="evidence" value="ECO:0000318"/>
    <property type="project" value="GO_Central"/>
</dbReference>
<dbReference type="FunFam" id="3.10.450.320:FF:000001">
    <property type="entry name" value="Mitochondrial import inner membrane translocase subunit Tim21"/>
    <property type="match status" value="1"/>
</dbReference>
<dbReference type="Gene3D" id="3.10.450.320">
    <property type="entry name" value="Mitochondrial import inner membrane translocase subunit Tim21"/>
    <property type="match status" value="1"/>
</dbReference>
<dbReference type="InterPro" id="IPR013261">
    <property type="entry name" value="Tim21"/>
</dbReference>
<dbReference type="InterPro" id="IPR038552">
    <property type="entry name" value="Tim21_IMS_sf"/>
</dbReference>
<dbReference type="PANTHER" id="PTHR13032">
    <property type="entry name" value="MITOCHONDRIAL IMPORT INNER MEMBRANE TRANSLOCASE SUBUNIT TIM21"/>
    <property type="match status" value="1"/>
</dbReference>
<dbReference type="PANTHER" id="PTHR13032:SF6">
    <property type="entry name" value="MITOCHONDRIAL IMPORT INNER MEMBRANE TRANSLOCASE SUBUNIT TIM21"/>
    <property type="match status" value="1"/>
</dbReference>
<dbReference type="Pfam" id="PF08294">
    <property type="entry name" value="TIM21"/>
    <property type="match status" value="1"/>
</dbReference>
<keyword id="KW-0472">Membrane</keyword>
<keyword id="KW-0496">Mitochondrion</keyword>
<keyword id="KW-0653">Protein transport</keyword>
<keyword id="KW-1185">Reference proteome</keyword>
<keyword id="KW-0809">Transit peptide</keyword>
<keyword id="KW-0811">Translocation</keyword>
<keyword id="KW-0812">Transmembrane</keyword>
<keyword id="KW-1133">Transmembrane helix</keyword>
<keyword id="KW-0813">Transport</keyword>
<protein>
    <recommendedName>
        <fullName>Mitochondrial import inner membrane translocase subunit Tim21</fullName>
    </recommendedName>
    <alternativeName>
        <fullName>TIM21-like protein, mitochondrial</fullName>
    </alternativeName>
</protein>
<sequence length="232" mass="26066">MLPRFLWRPVLCSYRALGSPSRSLTVSYRNLSCLALLHKGAFAAPTSRSLFCAERPISTGCTSLQVKDKRVSVQSTSDGAPPQNASHKVKEAGRDFTYFIVVLIGIGVTGGLFYVVFEELFSSSSPSKIYGEALEKCRSHPEVIGAFGEPIKGYGETTRRGRRQHVSHMEFVKDGIKCMRLKFYIEGSEPRKQGTVHIEVKENPASGKYEFQYIFVEIDTYPRRTIIIEDNR</sequence>